<proteinExistence type="evidence at protein level"/>
<protein>
    <recommendedName>
        <fullName evidence="4">Laccase-S</fullName>
        <shortName evidence="4">ThLacc-S</shortName>
        <ecNumber evidence="3">1.10.3.2</ecNumber>
    </recommendedName>
    <alternativeName>
        <fullName evidence="6">Benzenediol:oxygen oxidoreductase S</fullName>
    </alternativeName>
    <alternativeName>
        <fullName evidence="6">Diphenol oxidase S</fullName>
    </alternativeName>
    <alternativeName>
        <fullName evidence="6">Urishiol oxidase S</fullName>
    </alternativeName>
</protein>
<reference key="1">
    <citation type="journal article" date="2021" name="Front. Microbiol.">
        <title>Introducing a Thermo-Alkali-Stable, Metallic Ion-Tolerant Laccase Purified From White Rot Fungus Trametes hirsuta.</title>
        <authorList>
            <person name="Si J."/>
            <person name="Ma H."/>
            <person name="Cao Y."/>
            <person name="Cui B."/>
            <person name="Dai Y."/>
        </authorList>
    </citation>
    <scope>PROTEIN SEQUENCE</scope>
    <scope>FUNCTION</scope>
    <scope>CATALYTIC ACTIVITY</scope>
    <scope>COFACTOR</scope>
    <scope>ACTIVITY REGULATION</scope>
    <scope>BIOPHYSICOCHEMICAL PROPERTIES</scope>
    <scope>SUBUNIT</scope>
    <scope>SUBCELLULAR LOCATION</scope>
    <scope>MASS SPECTROMETRY</scope>
    <scope>BIOTECHNOLOGY</scope>
</reference>
<keyword id="KW-0186">Copper</keyword>
<keyword id="KW-0903">Direct protein sequencing</keyword>
<keyword id="KW-1015">Disulfide bond</keyword>
<keyword id="KW-0325">Glycoprotein</keyword>
<keyword id="KW-0439">Lignin degradation</keyword>
<keyword id="KW-0479">Metal-binding</keyword>
<keyword id="KW-0560">Oxidoreductase</keyword>
<keyword id="KW-0964">Secreted</keyword>
<feature type="chain" id="PRO_0000453427" description="Laccase-S">
    <location>
        <begin position="1"/>
        <end position="238"/>
    </location>
</feature>
<feature type="domain" description="Plastocyanin-like 1" evidence="2">
    <location>
        <begin position="4"/>
        <end position="87"/>
    </location>
</feature>
<feature type="domain" description="Plastocyanin-like 2" evidence="2">
    <location>
        <begin position="100"/>
        <end position="238"/>
    </location>
</feature>
<feature type="binding site" description="type 2 copper site" evidence="1">
    <location>
        <position position="21"/>
    </location>
    <ligand>
        <name>Cu cation</name>
        <dbReference type="ChEBI" id="CHEBI:23378"/>
        <label>1</label>
    </ligand>
</feature>
<feature type="binding site" description="type 3 copper site" evidence="1">
    <location>
        <position position="23"/>
    </location>
    <ligand>
        <name>Cu cation</name>
        <dbReference type="ChEBI" id="CHEBI:23378"/>
        <label>2</label>
    </ligand>
</feature>
<feature type="binding site" description="type 3 copper site" evidence="1">
    <location>
        <position position="66"/>
    </location>
    <ligand>
        <name>Cu cation</name>
        <dbReference type="ChEBI" id="CHEBI:23378"/>
        <label>2</label>
    </ligand>
</feature>
<feature type="binding site" description="type 3 copper site" evidence="1">
    <location>
        <position position="68"/>
    </location>
    <ligand>
        <name>Cu cation</name>
        <dbReference type="ChEBI" id="CHEBI:23378"/>
        <label>3</label>
    </ligand>
</feature>
<feature type="glycosylation site" description="N-linked (GlcNAc...) asparagine" evidence="2">
    <location>
        <position position="8"/>
    </location>
</feature>
<feature type="glycosylation site" description="N-linked (GlcNAc...) asparagine" evidence="2">
    <location>
        <position position="165"/>
    </location>
</feature>
<feature type="disulfide bond" evidence="1">
    <location>
        <begin position="74"/>
        <end position="162"/>
    </location>
</feature>
<feature type="non-terminal residue" evidence="4">
    <location>
        <position position="1"/>
    </location>
</feature>
<feature type="non-terminal residue" evidence="4">
    <location>
        <position position="238"/>
    </location>
</feature>
<accession>C0HLV6</accession>
<accession>C0HLU3</accession>
<sequence length="238" mass="27055">FQLNVIANMNNHTMLKQTSIHWHCHFQKGTNWADGHAFVNACPIASGHSFLYDFTAPDQHGTFWYHSHLSTQYCDGLRGHFVVYDPADPHHDLYDVDDEHTIITLADWYHVAAKLGHHFQLGADSTLINGSGRFAGDPTAHLTVIYVTQGKRYRFHLVSLSCDPNHVFSIDSNHMTVIEADAVSHEHCTVDSIQIYAGQRYSFHLTVDQDVDNYWIRAHPSFGTYSFHDGINSAIARY</sequence>
<comment type="function">
    <text evidence="1 3">Lignin degradation and detoxification of lignin-derived products (By similarity). Has activity towards 2,2'-azino-bis(3-ethylbenzothiazoline-6-sulfonic acid) (ABTS) (PubMed:34093489).</text>
</comment>
<comment type="catalytic activity">
    <reaction evidence="3">
        <text>4 hydroquinone + O2 = 4 benzosemiquinone + 2 H2O</text>
        <dbReference type="Rhea" id="RHEA:11276"/>
        <dbReference type="ChEBI" id="CHEBI:15377"/>
        <dbReference type="ChEBI" id="CHEBI:15379"/>
        <dbReference type="ChEBI" id="CHEBI:17594"/>
        <dbReference type="ChEBI" id="CHEBI:17977"/>
        <dbReference type="EC" id="1.10.3.2"/>
    </reaction>
</comment>
<comment type="cofactor">
    <cofactor evidence="3">
        <name>Cu cation</name>
        <dbReference type="ChEBI" id="CHEBI:23378"/>
    </cofactor>
    <text evidence="1">Binds 4 Cu cations per monomer.</text>
</comment>
<comment type="activity regulation">
    <text evidence="3">Activity is strongly promoted by toluene (PubMed:34093489). Activity is promoted by magnesium, potassium, cadmium, zinc, nickel, sodium, lead and manganese ions (PubMed:34093489). Completely inhibited by IAA (cysteine protease inhibitor), PMSF (serine protease inhibitor), DEP (histidine protease inhibitor) and NAI (tyrosine protease inhibitor) (PubMed:34093489). Inhibited by ethanol, acetone, SDS, and EDTA (PubMed:34093489). Activity is strongly inhibited by mercury ions (PubMed:34093489). Also inhibited by lithium, aluminum, calcium, barium and iron ions (PubMed:34093489).</text>
</comment>
<comment type="biophysicochemical properties">
    <kinetics>
        <KM>87.47 uM for ABTS (at pH 6.0 and 50 degrees Celsius)</KM>
        <text evidence="3">kcat is 129.37 sec(-1) for ABTS oxidation (at pH 6.0 and 50 degrees Celsius).</text>
    </kinetics>
    <phDependence>
        <text evidence="3">Optimum pH is 6 at 25 degrees Celsius (PubMed:34093489). Retains over 60 percent activity in the pH range from 4 to 10 (PubMed:34093489). Retains activity above 50% after incubation at pH 5-10 for 72 hours (PubMed:34093489).</text>
    </phDependence>
    <temperatureDependence>
        <text evidence="3">Optimum temperature is 50 degrees Celsius (PubMed:34093489). Retains over 57 percent activity when incubated for 2 hours at temperatures between 30-65 degrees Celsius (PubMed:34093489).</text>
    </temperatureDependence>
</comment>
<comment type="subunit">
    <text evidence="3">Monomer.</text>
</comment>
<comment type="subcellular location">
    <subcellularLocation>
        <location evidence="3">Secreted</location>
    </subcellularLocation>
</comment>
<comment type="mass spectrometry" mass="56976.37" method="MALDI" evidence="3"/>
<comment type="biotechnology">
    <text evidence="3">Able to metabolize the endocrine disrupting chemical (EDC) 17beta-estradiol (E2), and so could be used in biotechnological and industrial applications that require the biodegradation and bioremediation of the environmental pollutant.</text>
</comment>
<comment type="similarity">
    <text evidence="5">Belongs to the multicopper oxidase family.</text>
</comment>
<organism evidence="4">
    <name type="scientific">Trametes hirsuta</name>
    <name type="common">White-rot fungus</name>
    <name type="synonym">Coriolus hirsutus</name>
    <dbReference type="NCBI Taxonomy" id="5327"/>
    <lineage>
        <taxon>Eukaryota</taxon>
        <taxon>Fungi</taxon>
        <taxon>Dikarya</taxon>
        <taxon>Basidiomycota</taxon>
        <taxon>Agaricomycotina</taxon>
        <taxon>Agaricomycetes</taxon>
        <taxon>Polyporales</taxon>
        <taxon>Polyporaceae</taxon>
        <taxon>Trametes</taxon>
    </lineage>
</organism>
<name>LACS_TRAHI</name>
<dbReference type="EC" id="1.10.3.2" evidence="3"/>
<dbReference type="SMR" id="C0HLV6"/>
<dbReference type="GO" id="GO:0005576">
    <property type="term" value="C:extracellular region"/>
    <property type="evidence" value="ECO:0007669"/>
    <property type="project" value="UniProtKB-SubCell"/>
</dbReference>
<dbReference type="GO" id="GO:0005507">
    <property type="term" value="F:copper ion binding"/>
    <property type="evidence" value="ECO:0007669"/>
    <property type="project" value="InterPro"/>
</dbReference>
<dbReference type="GO" id="GO:0052716">
    <property type="term" value="F:hydroquinone:oxygen oxidoreductase activity"/>
    <property type="evidence" value="ECO:0000314"/>
    <property type="project" value="UniProtKB"/>
</dbReference>
<dbReference type="GO" id="GO:0046274">
    <property type="term" value="P:lignin catabolic process"/>
    <property type="evidence" value="ECO:0007669"/>
    <property type="project" value="UniProtKB-KW"/>
</dbReference>
<dbReference type="FunFam" id="2.60.40.420:FF:000045">
    <property type="entry name" value="Laccase 2"/>
    <property type="match status" value="1"/>
</dbReference>
<dbReference type="Gene3D" id="2.60.40.420">
    <property type="entry name" value="Cupredoxins - blue copper proteins"/>
    <property type="match status" value="2"/>
</dbReference>
<dbReference type="InterPro" id="IPR011707">
    <property type="entry name" value="Cu-oxidase-like_N"/>
</dbReference>
<dbReference type="InterPro" id="IPR001117">
    <property type="entry name" value="Cu-oxidase_2nd"/>
</dbReference>
<dbReference type="InterPro" id="IPR045087">
    <property type="entry name" value="Cu-oxidase_fam"/>
</dbReference>
<dbReference type="InterPro" id="IPR033138">
    <property type="entry name" value="Cu_oxidase_CS"/>
</dbReference>
<dbReference type="InterPro" id="IPR008972">
    <property type="entry name" value="Cupredoxin"/>
</dbReference>
<dbReference type="PANTHER" id="PTHR11709:SF511">
    <property type="entry name" value="LACCASE"/>
    <property type="match status" value="1"/>
</dbReference>
<dbReference type="PANTHER" id="PTHR11709">
    <property type="entry name" value="MULTI-COPPER OXIDASE"/>
    <property type="match status" value="1"/>
</dbReference>
<dbReference type="Pfam" id="PF00394">
    <property type="entry name" value="Cu-oxidase"/>
    <property type="match status" value="1"/>
</dbReference>
<dbReference type="Pfam" id="PF07732">
    <property type="entry name" value="Cu-oxidase_3"/>
    <property type="match status" value="1"/>
</dbReference>
<dbReference type="SUPFAM" id="SSF49503">
    <property type="entry name" value="Cupredoxins"/>
    <property type="match status" value="2"/>
</dbReference>
<dbReference type="PROSITE" id="PS00079">
    <property type="entry name" value="MULTICOPPER_OXIDASE1"/>
    <property type="match status" value="1"/>
</dbReference>
<evidence type="ECO:0000250" key="1">
    <source>
        <dbReference type="UniProtKB" id="D0VWU3"/>
    </source>
</evidence>
<evidence type="ECO:0000255" key="2"/>
<evidence type="ECO:0000269" key="3">
    <source>
    </source>
</evidence>
<evidence type="ECO:0000303" key="4">
    <source>
    </source>
</evidence>
<evidence type="ECO:0000305" key="5"/>
<evidence type="ECO:0000305" key="6">
    <source>
    </source>
</evidence>